<gene>
    <name type="ORF">B7H23.090</name>
    <name type="ORF">NCU04306</name>
</gene>
<evidence type="ECO:0000255" key="1">
    <source>
        <dbReference type="HAMAP-Rule" id="MF_03175"/>
    </source>
</evidence>
<evidence type="ECO:0000256" key="2">
    <source>
        <dbReference type="SAM" id="MobiDB-lite"/>
    </source>
</evidence>
<reference key="1">
    <citation type="journal article" date="2003" name="Nucleic Acids Res.">
        <title>What's in the genome of a filamentous fungus? Analysis of the Neurospora genome sequence.</title>
        <authorList>
            <person name="Mannhaupt G."/>
            <person name="Montrone C."/>
            <person name="Haase D."/>
            <person name="Mewes H.-W."/>
            <person name="Aign V."/>
            <person name="Hoheisel J.D."/>
            <person name="Fartmann B."/>
            <person name="Nyakatura G."/>
            <person name="Kempken F."/>
            <person name="Maier J."/>
            <person name="Schulte U."/>
        </authorList>
    </citation>
    <scope>NUCLEOTIDE SEQUENCE [LARGE SCALE GENOMIC DNA]</scope>
    <source>
        <strain>ATCC 24698 / 74-OR23-1A / CBS 708.71 / DSM 1257 / FGSC 987</strain>
    </source>
</reference>
<reference key="2">
    <citation type="journal article" date="2003" name="Nature">
        <title>The genome sequence of the filamentous fungus Neurospora crassa.</title>
        <authorList>
            <person name="Galagan J.E."/>
            <person name="Calvo S.E."/>
            <person name="Borkovich K.A."/>
            <person name="Selker E.U."/>
            <person name="Read N.D."/>
            <person name="Jaffe D.B."/>
            <person name="FitzHugh W."/>
            <person name="Ma L.-J."/>
            <person name="Smirnov S."/>
            <person name="Purcell S."/>
            <person name="Rehman B."/>
            <person name="Elkins T."/>
            <person name="Engels R."/>
            <person name="Wang S."/>
            <person name="Nielsen C.B."/>
            <person name="Butler J."/>
            <person name="Endrizzi M."/>
            <person name="Qui D."/>
            <person name="Ianakiev P."/>
            <person name="Bell-Pedersen D."/>
            <person name="Nelson M.A."/>
            <person name="Werner-Washburne M."/>
            <person name="Selitrennikoff C.P."/>
            <person name="Kinsey J.A."/>
            <person name="Braun E.L."/>
            <person name="Zelter A."/>
            <person name="Schulte U."/>
            <person name="Kothe G.O."/>
            <person name="Jedd G."/>
            <person name="Mewes H.-W."/>
            <person name="Staben C."/>
            <person name="Marcotte E."/>
            <person name="Greenberg D."/>
            <person name="Roy A."/>
            <person name="Foley K."/>
            <person name="Naylor J."/>
            <person name="Stange-Thomann N."/>
            <person name="Barrett R."/>
            <person name="Gnerre S."/>
            <person name="Kamal M."/>
            <person name="Kamvysselis M."/>
            <person name="Mauceli E.W."/>
            <person name="Bielke C."/>
            <person name="Rudd S."/>
            <person name="Frishman D."/>
            <person name="Krystofova S."/>
            <person name="Rasmussen C."/>
            <person name="Metzenberg R.L."/>
            <person name="Perkins D.D."/>
            <person name="Kroken S."/>
            <person name="Cogoni C."/>
            <person name="Macino G."/>
            <person name="Catcheside D.E.A."/>
            <person name="Li W."/>
            <person name="Pratt R.J."/>
            <person name="Osmani S.A."/>
            <person name="DeSouza C.P.C."/>
            <person name="Glass N.L."/>
            <person name="Orbach M.J."/>
            <person name="Berglund J.A."/>
            <person name="Voelker R."/>
            <person name="Yarden O."/>
            <person name="Plamann M."/>
            <person name="Seiler S."/>
            <person name="Dunlap J.C."/>
            <person name="Radford A."/>
            <person name="Aramayo R."/>
            <person name="Natvig D.O."/>
            <person name="Alex L.A."/>
            <person name="Mannhaupt G."/>
            <person name="Ebbole D.J."/>
            <person name="Freitag M."/>
            <person name="Paulsen I."/>
            <person name="Sachs M.S."/>
            <person name="Lander E.S."/>
            <person name="Nusbaum C."/>
            <person name="Birren B.W."/>
        </authorList>
    </citation>
    <scope>NUCLEOTIDE SEQUENCE [LARGE SCALE GENOMIC DNA]</scope>
    <source>
        <strain>ATCC 24698 / 74-OR23-1A / CBS 708.71 / DSM 1257 / FGSC 987</strain>
    </source>
</reference>
<dbReference type="EC" id="3.4.11.18" evidence="1"/>
<dbReference type="EMBL" id="BX294026">
    <property type="protein sequence ID" value="CAD71035.1"/>
    <property type="molecule type" value="Genomic_DNA"/>
</dbReference>
<dbReference type="EMBL" id="CM002240">
    <property type="protein sequence ID" value="EAA31716.2"/>
    <property type="molecule type" value="Genomic_DNA"/>
</dbReference>
<dbReference type="RefSeq" id="XP_960952.2">
    <property type="nucleotide sequence ID" value="XM_955859.2"/>
</dbReference>
<dbReference type="SMR" id="Q7S7L7"/>
<dbReference type="FunCoup" id="Q7S7L7">
    <property type="interactions" value="1147"/>
</dbReference>
<dbReference type="STRING" id="367110.Q7S7L7"/>
<dbReference type="MEROPS" id="M24.002"/>
<dbReference type="PaxDb" id="5141-EFNCRP00000003758"/>
<dbReference type="EnsemblFungi" id="EAA31716">
    <property type="protein sequence ID" value="EAA31716"/>
    <property type="gene ID" value="NCU04306"/>
</dbReference>
<dbReference type="GeneID" id="3877118"/>
<dbReference type="KEGG" id="ncr:NCU04306"/>
<dbReference type="VEuPathDB" id="FungiDB:NCU04306"/>
<dbReference type="HOGENOM" id="CLU_015857_7_1_1"/>
<dbReference type="InParanoid" id="Q7S7L7"/>
<dbReference type="OrthoDB" id="7848262at2759"/>
<dbReference type="Proteomes" id="UP000001805">
    <property type="component" value="Chromosome 2, Linkage Group V"/>
</dbReference>
<dbReference type="GO" id="GO:0005737">
    <property type="term" value="C:cytoplasm"/>
    <property type="evidence" value="ECO:0000318"/>
    <property type="project" value="GO_Central"/>
</dbReference>
<dbReference type="GO" id="GO:0004177">
    <property type="term" value="F:aminopeptidase activity"/>
    <property type="evidence" value="ECO:0000318"/>
    <property type="project" value="GO_Central"/>
</dbReference>
<dbReference type="GO" id="GO:0004239">
    <property type="term" value="F:initiator methionyl aminopeptidase activity"/>
    <property type="evidence" value="ECO:0007669"/>
    <property type="project" value="UniProtKB-UniRule"/>
</dbReference>
<dbReference type="GO" id="GO:0046872">
    <property type="term" value="F:metal ion binding"/>
    <property type="evidence" value="ECO:0007669"/>
    <property type="project" value="UniProtKB-UniRule"/>
</dbReference>
<dbReference type="GO" id="GO:0070006">
    <property type="term" value="F:metalloaminopeptidase activity"/>
    <property type="evidence" value="ECO:0007669"/>
    <property type="project" value="UniProtKB-UniRule"/>
</dbReference>
<dbReference type="GO" id="GO:0008235">
    <property type="term" value="F:metalloexopeptidase activity"/>
    <property type="evidence" value="ECO:0000318"/>
    <property type="project" value="GO_Central"/>
</dbReference>
<dbReference type="GO" id="GO:0006508">
    <property type="term" value="P:proteolysis"/>
    <property type="evidence" value="ECO:0007669"/>
    <property type="project" value="UniProtKB-KW"/>
</dbReference>
<dbReference type="CDD" id="cd01088">
    <property type="entry name" value="MetAP2"/>
    <property type="match status" value="1"/>
</dbReference>
<dbReference type="Gene3D" id="3.90.230.10">
    <property type="entry name" value="Creatinase/methionine aminopeptidase superfamily"/>
    <property type="match status" value="1"/>
</dbReference>
<dbReference type="Gene3D" id="1.10.10.10">
    <property type="entry name" value="Winged helix-like DNA-binding domain superfamily/Winged helix DNA-binding domain"/>
    <property type="match status" value="1"/>
</dbReference>
<dbReference type="HAMAP" id="MF_03175">
    <property type="entry name" value="MetAP_2_euk"/>
    <property type="match status" value="1"/>
</dbReference>
<dbReference type="InterPro" id="IPR036005">
    <property type="entry name" value="Creatinase/aminopeptidase-like"/>
</dbReference>
<dbReference type="InterPro" id="IPR050247">
    <property type="entry name" value="Met_Aminopeptidase_Type2"/>
</dbReference>
<dbReference type="InterPro" id="IPR000994">
    <property type="entry name" value="Pept_M24"/>
</dbReference>
<dbReference type="InterPro" id="IPR001714">
    <property type="entry name" value="Pept_M24_MAP"/>
</dbReference>
<dbReference type="InterPro" id="IPR002468">
    <property type="entry name" value="Pept_M24A_MAP2"/>
</dbReference>
<dbReference type="InterPro" id="IPR018349">
    <property type="entry name" value="Pept_M24A_MAP2_BS"/>
</dbReference>
<dbReference type="InterPro" id="IPR036388">
    <property type="entry name" value="WH-like_DNA-bd_sf"/>
</dbReference>
<dbReference type="InterPro" id="IPR036390">
    <property type="entry name" value="WH_DNA-bd_sf"/>
</dbReference>
<dbReference type="NCBIfam" id="TIGR00501">
    <property type="entry name" value="met_pdase_II"/>
    <property type="match status" value="1"/>
</dbReference>
<dbReference type="PANTHER" id="PTHR45777">
    <property type="entry name" value="METHIONINE AMINOPEPTIDASE 2"/>
    <property type="match status" value="1"/>
</dbReference>
<dbReference type="PANTHER" id="PTHR45777:SF2">
    <property type="entry name" value="METHIONINE AMINOPEPTIDASE 2"/>
    <property type="match status" value="1"/>
</dbReference>
<dbReference type="Pfam" id="PF00557">
    <property type="entry name" value="Peptidase_M24"/>
    <property type="match status" value="1"/>
</dbReference>
<dbReference type="PRINTS" id="PR00599">
    <property type="entry name" value="MAPEPTIDASE"/>
</dbReference>
<dbReference type="SUPFAM" id="SSF55920">
    <property type="entry name" value="Creatinase/aminopeptidase"/>
    <property type="match status" value="1"/>
</dbReference>
<dbReference type="SUPFAM" id="SSF46785">
    <property type="entry name" value="Winged helix' DNA-binding domain"/>
    <property type="match status" value="1"/>
</dbReference>
<dbReference type="PROSITE" id="PS01202">
    <property type="entry name" value="MAP_2"/>
    <property type="match status" value="1"/>
</dbReference>
<keyword id="KW-0031">Aminopeptidase</keyword>
<keyword id="KW-0963">Cytoplasm</keyword>
<keyword id="KW-0378">Hydrolase</keyword>
<keyword id="KW-0479">Metal-binding</keyword>
<keyword id="KW-0645">Protease</keyword>
<keyword id="KW-1185">Reference proteome</keyword>
<proteinExistence type="inferred from homology"/>
<name>MAP2_NEUCR</name>
<sequence length="437" mass="47731">MAAQAAPAEELSKLSVDETKPAPAAANGNDSDAESGDEEAEEGAAAPAAGAAKKKKKRKPKKKKKAPTSQSEPPRVLVSQLFPNNQYPKGEEVEYVNDNLNRVTNEEKRHLDNLNQEFLTDYRHAAEVHRQVRQWAQKSIKPGQTLTEIAENIEDSVRALTGHSGLEEGDALIAGMGFPTGLSINHCAAHYTPNAGNKMVLQEDDVMKVDFGVHVNGRIVDSAFTVAFNPRYDPLLEAVKAATNAGIKEAGIDVRVGDIGAAIQEVMESYEVEINGQMLPVKSIRNLNGHTINHYSIHGTKSVPIVKSNDQTKMEEGDVFAIETFGSTGNGYVHEEGEVSHYAKRGDAAKVDLRLSSAKSLLNVITKNFGTLPFCRRYIDRLGQDKYLLGLNNLVSQGIVEAYPPLVDKKGSYTAQYEHTILLRPTVKEVISRGDDF</sequence>
<feature type="chain" id="PRO_0000407658" description="Methionine aminopeptidase 2">
    <location>
        <begin position="1"/>
        <end position="437"/>
    </location>
</feature>
<feature type="region of interest" description="Disordered" evidence="2">
    <location>
        <begin position="1"/>
        <end position="90"/>
    </location>
</feature>
<feature type="compositionally biased region" description="Basic and acidic residues" evidence="2">
    <location>
        <begin position="10"/>
        <end position="20"/>
    </location>
</feature>
<feature type="compositionally biased region" description="Acidic residues" evidence="2">
    <location>
        <begin position="31"/>
        <end position="42"/>
    </location>
</feature>
<feature type="compositionally biased region" description="Basic residues" evidence="2">
    <location>
        <begin position="52"/>
        <end position="66"/>
    </location>
</feature>
<feature type="binding site" evidence="1">
    <location>
        <position position="190"/>
    </location>
    <ligand>
        <name>substrate</name>
    </ligand>
</feature>
<feature type="binding site" evidence="1">
    <location>
        <position position="210"/>
    </location>
    <ligand>
        <name>a divalent metal cation</name>
        <dbReference type="ChEBI" id="CHEBI:60240"/>
        <label>1</label>
    </ligand>
</feature>
<feature type="binding site" evidence="1">
    <location>
        <position position="221"/>
    </location>
    <ligand>
        <name>a divalent metal cation</name>
        <dbReference type="ChEBI" id="CHEBI:60240"/>
        <label>1</label>
    </ligand>
</feature>
<feature type="binding site" evidence="1">
    <location>
        <position position="221"/>
    </location>
    <ligand>
        <name>a divalent metal cation</name>
        <dbReference type="ChEBI" id="CHEBI:60240"/>
        <label>2</label>
        <note>catalytic</note>
    </ligand>
</feature>
<feature type="binding site" evidence="1">
    <location>
        <position position="290"/>
    </location>
    <ligand>
        <name>a divalent metal cation</name>
        <dbReference type="ChEBI" id="CHEBI:60240"/>
        <label>2</label>
        <note>catalytic</note>
    </ligand>
</feature>
<feature type="binding site" evidence="1">
    <location>
        <position position="298"/>
    </location>
    <ligand>
        <name>substrate</name>
    </ligand>
</feature>
<feature type="binding site" evidence="1">
    <location>
        <position position="323"/>
    </location>
    <ligand>
        <name>a divalent metal cation</name>
        <dbReference type="ChEBI" id="CHEBI:60240"/>
        <label>2</label>
        <note>catalytic</note>
    </ligand>
</feature>
<feature type="binding site" evidence="1">
    <location>
        <position position="418"/>
    </location>
    <ligand>
        <name>a divalent metal cation</name>
        <dbReference type="ChEBI" id="CHEBI:60240"/>
        <label>1</label>
    </ligand>
</feature>
<feature type="binding site" evidence="1">
    <location>
        <position position="418"/>
    </location>
    <ligand>
        <name>a divalent metal cation</name>
        <dbReference type="ChEBI" id="CHEBI:60240"/>
        <label>2</label>
        <note>catalytic</note>
    </ligand>
</feature>
<organism>
    <name type="scientific">Neurospora crassa (strain ATCC 24698 / 74-OR23-1A / CBS 708.71 / DSM 1257 / FGSC 987)</name>
    <dbReference type="NCBI Taxonomy" id="367110"/>
    <lineage>
        <taxon>Eukaryota</taxon>
        <taxon>Fungi</taxon>
        <taxon>Dikarya</taxon>
        <taxon>Ascomycota</taxon>
        <taxon>Pezizomycotina</taxon>
        <taxon>Sordariomycetes</taxon>
        <taxon>Sordariomycetidae</taxon>
        <taxon>Sordariales</taxon>
        <taxon>Sordariaceae</taxon>
        <taxon>Neurospora</taxon>
    </lineage>
</organism>
<comment type="function">
    <text evidence="1">Cotranslationally removes the N-terminal methionine from nascent proteins. The N-terminal methionine is often cleaved when the second residue in the primary sequence is small and uncharged (Met-Ala-, Cys, Gly, Pro, Ser, Thr, or Val).</text>
</comment>
<comment type="catalytic activity">
    <reaction evidence="1">
        <text>Release of N-terminal amino acids, preferentially methionine, from peptides and arylamides.</text>
        <dbReference type="EC" id="3.4.11.18"/>
    </reaction>
</comment>
<comment type="cofactor">
    <cofactor evidence="1">
        <name>Co(2+)</name>
        <dbReference type="ChEBI" id="CHEBI:48828"/>
    </cofactor>
    <cofactor evidence="1">
        <name>Zn(2+)</name>
        <dbReference type="ChEBI" id="CHEBI:29105"/>
    </cofactor>
    <cofactor evidence="1">
        <name>Mn(2+)</name>
        <dbReference type="ChEBI" id="CHEBI:29035"/>
    </cofactor>
    <cofactor evidence="1">
        <name>Fe(2+)</name>
        <dbReference type="ChEBI" id="CHEBI:29033"/>
    </cofactor>
    <text evidence="1">Binds 2 divalent metal cations per subunit. Has a high-affinity and a low affinity metal-binding site. The true nature of the physiological cofactor is under debate. The enzyme is active with cobalt, zinc, manganese or divalent iron ions. Most likely, methionine aminopeptidases function as mononuclear Fe(2+)-metalloproteases under physiological conditions, and the catalytically relevant metal-binding site has been assigned to the histidine-containing high-affinity site.</text>
</comment>
<comment type="subcellular location">
    <subcellularLocation>
        <location evidence="1">Cytoplasm</location>
    </subcellularLocation>
</comment>
<comment type="similarity">
    <text evidence="1">Belongs to the peptidase M24A family. Methionine aminopeptidase eukaryotic type 2 subfamily.</text>
</comment>
<protein>
    <recommendedName>
        <fullName evidence="1">Methionine aminopeptidase 2</fullName>
        <shortName evidence="1">MAP 2</shortName>
        <shortName evidence="1">MetAP 2</shortName>
        <ecNumber evidence="1">3.4.11.18</ecNumber>
    </recommendedName>
    <alternativeName>
        <fullName evidence="1">Peptidase M</fullName>
    </alternativeName>
</protein>
<accession>Q7S7L7</accession>
<accession>Q871H0</accession>